<proteinExistence type="inferred from homology"/>
<gene>
    <name evidence="1" type="primary">prfC</name>
    <name type="ordered locus">SaurJH1_1037</name>
</gene>
<sequence length="520" mass="59574">MNLKQEVESRKTFAIISHPDAGKTTLTEKLLYFSGAIREAGTVKGKKTGKFATSDWMKVEQERGISVTSSVMQFDYDDYKINILDTPGHEDFSEDTYRTLMAVDSAVMVIDCAKGIEPQTLKLFKVCKMRGIPIFTFINKLDRVGKEPFELLDEIEETLNIETYPMNWPIGMGQSFFGIIDRKSKTIEPFRDEENILHLNDDFELEEDHAITNDSAFEQAIEELMLVEEAGEAFDNDALLSGDLTPVFFGSALANFGVQNFLNAYVDFAPMPNARQTKEDVEVSPFDDSFSGFIFKIQANMDPKHRDRIAFMRVVSGAFERGMDVTLQRTNKKQKITRSTSFMADDKETVNHAVAGDIIGLYDTGNYQIGDTLVGGKQTYSFQDLPQFTPEIFMKVSAKNVMKQKHFHKGIEQLVQEGAIQYYKTLHTNQIILGAVGQLQFEVFEHRMKNEYNVDVVMEPVGRKIARWIENEDQITDKMNTSRSILVKDRYDDLVFLFENEFATRWFEEKFLEIKLYSLL</sequence>
<accession>A6U0C5</accession>
<dbReference type="EMBL" id="CP000736">
    <property type="protein sequence ID" value="ABR51893.1"/>
    <property type="molecule type" value="Genomic_DNA"/>
</dbReference>
<dbReference type="SMR" id="A6U0C5"/>
<dbReference type="KEGG" id="sah:SaurJH1_1037"/>
<dbReference type="HOGENOM" id="CLU_002794_2_1_9"/>
<dbReference type="GO" id="GO:0005829">
    <property type="term" value="C:cytosol"/>
    <property type="evidence" value="ECO:0007669"/>
    <property type="project" value="TreeGrafter"/>
</dbReference>
<dbReference type="GO" id="GO:0005525">
    <property type="term" value="F:GTP binding"/>
    <property type="evidence" value="ECO:0007669"/>
    <property type="project" value="UniProtKB-UniRule"/>
</dbReference>
<dbReference type="GO" id="GO:0003924">
    <property type="term" value="F:GTPase activity"/>
    <property type="evidence" value="ECO:0007669"/>
    <property type="project" value="InterPro"/>
</dbReference>
<dbReference type="GO" id="GO:0016150">
    <property type="term" value="F:translation release factor activity, codon nonspecific"/>
    <property type="evidence" value="ECO:0007669"/>
    <property type="project" value="TreeGrafter"/>
</dbReference>
<dbReference type="GO" id="GO:0016149">
    <property type="term" value="F:translation release factor activity, codon specific"/>
    <property type="evidence" value="ECO:0007669"/>
    <property type="project" value="UniProtKB-UniRule"/>
</dbReference>
<dbReference type="GO" id="GO:0006449">
    <property type="term" value="P:regulation of translational termination"/>
    <property type="evidence" value="ECO:0007669"/>
    <property type="project" value="UniProtKB-UniRule"/>
</dbReference>
<dbReference type="CDD" id="cd04169">
    <property type="entry name" value="RF3"/>
    <property type="match status" value="1"/>
</dbReference>
<dbReference type="CDD" id="cd16259">
    <property type="entry name" value="RF3_III"/>
    <property type="match status" value="1"/>
</dbReference>
<dbReference type="FunFam" id="2.40.30.10:FF:000040">
    <property type="entry name" value="Peptide chain release factor 3"/>
    <property type="match status" value="1"/>
</dbReference>
<dbReference type="FunFam" id="3.30.70.3280:FF:000001">
    <property type="entry name" value="Peptide chain release factor 3"/>
    <property type="match status" value="1"/>
</dbReference>
<dbReference type="FunFam" id="3.40.50.300:FF:000542">
    <property type="entry name" value="Peptide chain release factor 3"/>
    <property type="match status" value="1"/>
</dbReference>
<dbReference type="Gene3D" id="3.40.50.300">
    <property type="entry name" value="P-loop containing nucleotide triphosphate hydrolases"/>
    <property type="match status" value="1"/>
</dbReference>
<dbReference type="Gene3D" id="3.30.70.3280">
    <property type="entry name" value="Peptide chain release factor 3, domain III"/>
    <property type="match status" value="1"/>
</dbReference>
<dbReference type="Gene3D" id="2.40.30.10">
    <property type="entry name" value="Translation factors"/>
    <property type="match status" value="1"/>
</dbReference>
<dbReference type="HAMAP" id="MF_00072">
    <property type="entry name" value="Rel_fac_3"/>
    <property type="match status" value="1"/>
</dbReference>
<dbReference type="InterPro" id="IPR053905">
    <property type="entry name" value="EF-G-like_DII"/>
</dbReference>
<dbReference type="InterPro" id="IPR035647">
    <property type="entry name" value="EFG_III/V"/>
</dbReference>
<dbReference type="InterPro" id="IPR031157">
    <property type="entry name" value="G_TR_CS"/>
</dbReference>
<dbReference type="InterPro" id="IPR027417">
    <property type="entry name" value="P-loop_NTPase"/>
</dbReference>
<dbReference type="InterPro" id="IPR004548">
    <property type="entry name" value="PrfC"/>
</dbReference>
<dbReference type="InterPro" id="IPR032090">
    <property type="entry name" value="RF3_C"/>
</dbReference>
<dbReference type="InterPro" id="IPR038467">
    <property type="entry name" value="RF3_dom_3_sf"/>
</dbReference>
<dbReference type="InterPro" id="IPR041732">
    <property type="entry name" value="RF3_GTP-bd"/>
</dbReference>
<dbReference type="InterPro" id="IPR005225">
    <property type="entry name" value="Small_GTP-bd"/>
</dbReference>
<dbReference type="InterPro" id="IPR000795">
    <property type="entry name" value="T_Tr_GTP-bd_dom"/>
</dbReference>
<dbReference type="InterPro" id="IPR009000">
    <property type="entry name" value="Transl_B-barrel_sf"/>
</dbReference>
<dbReference type="NCBIfam" id="TIGR00503">
    <property type="entry name" value="prfC"/>
    <property type="match status" value="1"/>
</dbReference>
<dbReference type="NCBIfam" id="NF001964">
    <property type="entry name" value="PRK00741.1"/>
    <property type="match status" value="1"/>
</dbReference>
<dbReference type="NCBIfam" id="TIGR00231">
    <property type="entry name" value="small_GTP"/>
    <property type="match status" value="1"/>
</dbReference>
<dbReference type="PANTHER" id="PTHR43556">
    <property type="entry name" value="PEPTIDE CHAIN RELEASE FACTOR RF3"/>
    <property type="match status" value="1"/>
</dbReference>
<dbReference type="PANTHER" id="PTHR43556:SF2">
    <property type="entry name" value="PEPTIDE CHAIN RELEASE FACTOR RF3"/>
    <property type="match status" value="1"/>
</dbReference>
<dbReference type="Pfam" id="PF22042">
    <property type="entry name" value="EF-G_D2"/>
    <property type="match status" value="1"/>
</dbReference>
<dbReference type="Pfam" id="PF00009">
    <property type="entry name" value="GTP_EFTU"/>
    <property type="match status" value="1"/>
</dbReference>
<dbReference type="Pfam" id="PF16658">
    <property type="entry name" value="RF3_C"/>
    <property type="match status" value="1"/>
</dbReference>
<dbReference type="PRINTS" id="PR00315">
    <property type="entry name" value="ELONGATNFCT"/>
</dbReference>
<dbReference type="SUPFAM" id="SSF54980">
    <property type="entry name" value="EF-G C-terminal domain-like"/>
    <property type="match status" value="1"/>
</dbReference>
<dbReference type="SUPFAM" id="SSF52540">
    <property type="entry name" value="P-loop containing nucleoside triphosphate hydrolases"/>
    <property type="match status" value="1"/>
</dbReference>
<dbReference type="SUPFAM" id="SSF50447">
    <property type="entry name" value="Translation proteins"/>
    <property type="match status" value="1"/>
</dbReference>
<dbReference type="PROSITE" id="PS00301">
    <property type="entry name" value="G_TR_1"/>
    <property type="match status" value="1"/>
</dbReference>
<dbReference type="PROSITE" id="PS51722">
    <property type="entry name" value="G_TR_2"/>
    <property type="match status" value="1"/>
</dbReference>
<comment type="function">
    <text evidence="1">Increases the formation of ribosomal termination complexes and stimulates activities of RF-1 and RF-2. It binds guanine nucleotides and has strong preference for UGA stop codons. It may interact directly with the ribosome. The stimulation of RF-1 and RF-2 is significantly reduced by GTP and GDP, but not by GMP.</text>
</comment>
<comment type="subcellular location">
    <subcellularLocation>
        <location evidence="1">Cytoplasm</location>
    </subcellularLocation>
</comment>
<comment type="similarity">
    <text evidence="1">Belongs to the TRAFAC class translation factor GTPase superfamily. Classic translation factor GTPase family. PrfC subfamily.</text>
</comment>
<feature type="chain" id="PRO_1000075171" description="Peptide chain release factor 3">
    <location>
        <begin position="1"/>
        <end position="520"/>
    </location>
</feature>
<feature type="domain" description="tr-type G">
    <location>
        <begin position="8"/>
        <end position="277"/>
    </location>
</feature>
<feature type="binding site" evidence="1">
    <location>
        <begin position="17"/>
        <end position="24"/>
    </location>
    <ligand>
        <name>GTP</name>
        <dbReference type="ChEBI" id="CHEBI:37565"/>
    </ligand>
</feature>
<feature type="binding site" evidence="1">
    <location>
        <begin position="85"/>
        <end position="89"/>
    </location>
    <ligand>
        <name>GTP</name>
        <dbReference type="ChEBI" id="CHEBI:37565"/>
    </ligand>
</feature>
<feature type="binding site" evidence="1">
    <location>
        <begin position="139"/>
        <end position="142"/>
    </location>
    <ligand>
        <name>GTP</name>
        <dbReference type="ChEBI" id="CHEBI:37565"/>
    </ligand>
</feature>
<protein>
    <recommendedName>
        <fullName evidence="1">Peptide chain release factor 3</fullName>
        <shortName evidence="1">RF-3</shortName>
    </recommendedName>
</protein>
<reference key="1">
    <citation type="submission" date="2007-06" db="EMBL/GenBank/DDBJ databases">
        <title>Complete sequence of chromosome of Staphylococcus aureus subsp. aureus JH1.</title>
        <authorList>
            <consortium name="US DOE Joint Genome Institute"/>
            <person name="Copeland A."/>
            <person name="Lucas S."/>
            <person name="Lapidus A."/>
            <person name="Barry K."/>
            <person name="Detter J.C."/>
            <person name="Glavina del Rio T."/>
            <person name="Hammon N."/>
            <person name="Israni S."/>
            <person name="Dalin E."/>
            <person name="Tice H."/>
            <person name="Pitluck S."/>
            <person name="Chain P."/>
            <person name="Malfatti S."/>
            <person name="Shin M."/>
            <person name="Vergez L."/>
            <person name="Schmutz J."/>
            <person name="Larimer F."/>
            <person name="Land M."/>
            <person name="Hauser L."/>
            <person name="Kyrpides N."/>
            <person name="Ivanova N."/>
            <person name="Tomasz A."/>
            <person name="Richardson P."/>
        </authorList>
    </citation>
    <scope>NUCLEOTIDE SEQUENCE [LARGE SCALE GENOMIC DNA]</scope>
    <source>
        <strain>JH1</strain>
    </source>
</reference>
<keyword id="KW-0963">Cytoplasm</keyword>
<keyword id="KW-0342">GTP-binding</keyword>
<keyword id="KW-0547">Nucleotide-binding</keyword>
<keyword id="KW-0648">Protein biosynthesis</keyword>
<evidence type="ECO:0000255" key="1">
    <source>
        <dbReference type="HAMAP-Rule" id="MF_00072"/>
    </source>
</evidence>
<name>RF3_STAA2</name>
<organism>
    <name type="scientific">Staphylococcus aureus (strain JH1)</name>
    <dbReference type="NCBI Taxonomy" id="359787"/>
    <lineage>
        <taxon>Bacteria</taxon>
        <taxon>Bacillati</taxon>
        <taxon>Bacillota</taxon>
        <taxon>Bacilli</taxon>
        <taxon>Bacillales</taxon>
        <taxon>Staphylococcaceae</taxon>
        <taxon>Staphylococcus</taxon>
    </lineage>
</organism>